<name>ACKA_BACC1</name>
<feature type="chain" id="PRO_0000107526" description="Acetate kinase">
    <location>
        <begin position="1"/>
        <end position="397"/>
    </location>
</feature>
<feature type="active site" description="Proton donor/acceptor" evidence="1">
    <location>
        <position position="146"/>
    </location>
</feature>
<feature type="binding site" evidence="1">
    <location>
        <position position="8"/>
    </location>
    <ligand>
        <name>Mg(2+)</name>
        <dbReference type="ChEBI" id="CHEBI:18420"/>
    </ligand>
</feature>
<feature type="binding site" evidence="1">
    <location>
        <position position="15"/>
    </location>
    <ligand>
        <name>ATP</name>
        <dbReference type="ChEBI" id="CHEBI:30616"/>
    </ligand>
</feature>
<feature type="binding site" evidence="1">
    <location>
        <position position="89"/>
    </location>
    <ligand>
        <name>substrate</name>
    </ligand>
</feature>
<feature type="binding site" evidence="1">
    <location>
        <begin position="206"/>
        <end position="210"/>
    </location>
    <ligand>
        <name>ATP</name>
        <dbReference type="ChEBI" id="CHEBI:30616"/>
    </ligand>
</feature>
<feature type="binding site" evidence="1">
    <location>
        <begin position="281"/>
        <end position="283"/>
    </location>
    <ligand>
        <name>ATP</name>
        <dbReference type="ChEBI" id="CHEBI:30616"/>
    </ligand>
</feature>
<feature type="binding site" evidence="1">
    <location>
        <begin position="329"/>
        <end position="333"/>
    </location>
    <ligand>
        <name>ATP</name>
        <dbReference type="ChEBI" id="CHEBI:30616"/>
    </ligand>
</feature>
<feature type="binding site" evidence="1">
    <location>
        <position position="382"/>
    </location>
    <ligand>
        <name>Mg(2+)</name>
        <dbReference type="ChEBI" id="CHEBI:18420"/>
    </ligand>
</feature>
<feature type="site" description="Transition state stabilizer" evidence="1">
    <location>
        <position position="178"/>
    </location>
</feature>
<feature type="site" description="Transition state stabilizer" evidence="1">
    <location>
        <position position="239"/>
    </location>
</feature>
<protein>
    <recommendedName>
        <fullName evidence="1">Acetate kinase</fullName>
        <ecNumber evidence="1">2.7.2.1</ecNumber>
    </recommendedName>
    <alternativeName>
        <fullName evidence="1">Acetokinase</fullName>
    </alternativeName>
</protein>
<comment type="function">
    <text evidence="1">Catalyzes the formation of acetyl phosphate from acetate and ATP. Can also catalyze the reverse reaction.</text>
</comment>
<comment type="catalytic activity">
    <reaction evidence="1">
        <text>acetate + ATP = acetyl phosphate + ADP</text>
        <dbReference type="Rhea" id="RHEA:11352"/>
        <dbReference type="ChEBI" id="CHEBI:22191"/>
        <dbReference type="ChEBI" id="CHEBI:30089"/>
        <dbReference type="ChEBI" id="CHEBI:30616"/>
        <dbReference type="ChEBI" id="CHEBI:456216"/>
        <dbReference type="EC" id="2.7.2.1"/>
    </reaction>
</comment>
<comment type="cofactor">
    <cofactor evidence="1">
        <name>Mg(2+)</name>
        <dbReference type="ChEBI" id="CHEBI:18420"/>
    </cofactor>
    <cofactor evidence="1">
        <name>Mn(2+)</name>
        <dbReference type="ChEBI" id="CHEBI:29035"/>
    </cofactor>
    <text evidence="1">Mg(2+). Can also accept Mn(2+).</text>
</comment>
<comment type="pathway">
    <text evidence="1">Metabolic intermediate biosynthesis; acetyl-CoA biosynthesis; acetyl-CoA from acetate: step 1/2.</text>
</comment>
<comment type="subunit">
    <text evidence="1">Homodimer.</text>
</comment>
<comment type="subcellular location">
    <subcellularLocation>
        <location evidence="1">Cytoplasm</location>
    </subcellularLocation>
</comment>
<comment type="similarity">
    <text evidence="1">Belongs to the acetokinase family.</text>
</comment>
<reference key="1">
    <citation type="journal article" date="2004" name="Nucleic Acids Res.">
        <title>The genome sequence of Bacillus cereus ATCC 10987 reveals metabolic adaptations and a large plasmid related to Bacillus anthracis pXO1.</title>
        <authorList>
            <person name="Rasko D.A."/>
            <person name="Ravel J."/>
            <person name="Oekstad O.A."/>
            <person name="Helgason E."/>
            <person name="Cer R.Z."/>
            <person name="Jiang L."/>
            <person name="Shores K.A."/>
            <person name="Fouts D.E."/>
            <person name="Tourasse N.J."/>
            <person name="Angiuoli S.V."/>
            <person name="Kolonay J.F."/>
            <person name="Nelson W.C."/>
            <person name="Kolstoe A.-B."/>
            <person name="Fraser C.M."/>
            <person name="Read T.D."/>
        </authorList>
    </citation>
    <scope>NUCLEOTIDE SEQUENCE [LARGE SCALE GENOMIC DNA]</scope>
    <source>
        <strain>ATCC 10987 / NRS 248</strain>
    </source>
</reference>
<dbReference type="EC" id="2.7.2.1" evidence="1"/>
<dbReference type="EMBL" id="AE017194">
    <property type="protein sequence ID" value="AAS43674.1"/>
    <property type="molecule type" value="Genomic_DNA"/>
</dbReference>
<dbReference type="SMR" id="Q72Z96"/>
<dbReference type="KEGG" id="bca:BCE_4773"/>
<dbReference type="HOGENOM" id="CLU_020352_0_1_9"/>
<dbReference type="UniPathway" id="UPA00340">
    <property type="reaction ID" value="UER00458"/>
</dbReference>
<dbReference type="Proteomes" id="UP000002527">
    <property type="component" value="Chromosome"/>
</dbReference>
<dbReference type="GO" id="GO:0005737">
    <property type="term" value="C:cytoplasm"/>
    <property type="evidence" value="ECO:0007669"/>
    <property type="project" value="UniProtKB-SubCell"/>
</dbReference>
<dbReference type="GO" id="GO:0008776">
    <property type="term" value="F:acetate kinase activity"/>
    <property type="evidence" value="ECO:0007669"/>
    <property type="project" value="UniProtKB-UniRule"/>
</dbReference>
<dbReference type="GO" id="GO:0005524">
    <property type="term" value="F:ATP binding"/>
    <property type="evidence" value="ECO:0007669"/>
    <property type="project" value="UniProtKB-KW"/>
</dbReference>
<dbReference type="GO" id="GO:0000287">
    <property type="term" value="F:magnesium ion binding"/>
    <property type="evidence" value="ECO:0007669"/>
    <property type="project" value="UniProtKB-UniRule"/>
</dbReference>
<dbReference type="GO" id="GO:0006083">
    <property type="term" value="P:acetate metabolic process"/>
    <property type="evidence" value="ECO:0007669"/>
    <property type="project" value="TreeGrafter"/>
</dbReference>
<dbReference type="GO" id="GO:0006085">
    <property type="term" value="P:acetyl-CoA biosynthetic process"/>
    <property type="evidence" value="ECO:0007669"/>
    <property type="project" value="UniProtKB-UniRule"/>
</dbReference>
<dbReference type="CDD" id="cd24010">
    <property type="entry name" value="ASKHA_NBD_AcK_PK"/>
    <property type="match status" value="1"/>
</dbReference>
<dbReference type="Gene3D" id="3.30.420.40">
    <property type="match status" value="2"/>
</dbReference>
<dbReference type="HAMAP" id="MF_00020">
    <property type="entry name" value="Acetate_kinase"/>
    <property type="match status" value="1"/>
</dbReference>
<dbReference type="InterPro" id="IPR004372">
    <property type="entry name" value="Ac/propionate_kinase"/>
</dbReference>
<dbReference type="InterPro" id="IPR000890">
    <property type="entry name" value="Aliphatic_acid_kin_short-chain"/>
</dbReference>
<dbReference type="InterPro" id="IPR023865">
    <property type="entry name" value="Aliphatic_acid_kinase_CS"/>
</dbReference>
<dbReference type="InterPro" id="IPR043129">
    <property type="entry name" value="ATPase_NBD"/>
</dbReference>
<dbReference type="NCBIfam" id="TIGR00016">
    <property type="entry name" value="ackA"/>
    <property type="match status" value="1"/>
</dbReference>
<dbReference type="PANTHER" id="PTHR21060">
    <property type="entry name" value="ACETATE KINASE"/>
    <property type="match status" value="1"/>
</dbReference>
<dbReference type="PANTHER" id="PTHR21060:SF15">
    <property type="entry name" value="ACETATE KINASE-RELATED"/>
    <property type="match status" value="1"/>
</dbReference>
<dbReference type="Pfam" id="PF00871">
    <property type="entry name" value="Acetate_kinase"/>
    <property type="match status" value="1"/>
</dbReference>
<dbReference type="PIRSF" id="PIRSF000722">
    <property type="entry name" value="Acetate_prop_kin"/>
    <property type="match status" value="1"/>
</dbReference>
<dbReference type="PRINTS" id="PR00471">
    <property type="entry name" value="ACETATEKNASE"/>
</dbReference>
<dbReference type="SUPFAM" id="SSF53067">
    <property type="entry name" value="Actin-like ATPase domain"/>
    <property type="match status" value="2"/>
</dbReference>
<dbReference type="PROSITE" id="PS01075">
    <property type="entry name" value="ACETATE_KINASE_1"/>
    <property type="match status" value="1"/>
</dbReference>
<dbReference type="PROSITE" id="PS01076">
    <property type="entry name" value="ACETATE_KINASE_2"/>
    <property type="match status" value="1"/>
</dbReference>
<keyword id="KW-0067">ATP-binding</keyword>
<keyword id="KW-0963">Cytoplasm</keyword>
<keyword id="KW-0418">Kinase</keyword>
<keyword id="KW-0460">Magnesium</keyword>
<keyword id="KW-0479">Metal-binding</keyword>
<keyword id="KW-0547">Nucleotide-binding</keyword>
<keyword id="KW-0808">Transferase</keyword>
<accession>Q72Z96</accession>
<evidence type="ECO:0000255" key="1">
    <source>
        <dbReference type="HAMAP-Rule" id="MF_00020"/>
    </source>
</evidence>
<gene>
    <name evidence="1" type="primary">ackA</name>
    <name type="ordered locus">BCE_4773</name>
</gene>
<organism>
    <name type="scientific">Bacillus cereus (strain ATCC 10987 / NRS 248)</name>
    <dbReference type="NCBI Taxonomy" id="222523"/>
    <lineage>
        <taxon>Bacteria</taxon>
        <taxon>Bacillati</taxon>
        <taxon>Bacillota</taxon>
        <taxon>Bacilli</taxon>
        <taxon>Bacillales</taxon>
        <taxon>Bacillaceae</taxon>
        <taxon>Bacillus</taxon>
        <taxon>Bacillus cereus group</taxon>
    </lineage>
</organism>
<sequence length="397" mass="43232">MSKIIAINAGSSSLKFQLFEMPSETVLTKGLVERIGLEDSIFTITVDGEKQKEITNIPDHAVAVNMLLKKLTENGIVKSLDEIGGIGHRVVHGGEKFADSVLITDEVLADIEELSDLAPLHNPANVVGIKAFQEVLPNVPAVAVFDTAFHQTMPESAFLYSLPYEYYEKFGIRKYGFHGTSHKYVTERAAELLGRPLESLSLLSCHLGNGASIAAVEGGKSIDTSMGFTPLAGVTMGTRSGNIDPALIPYIMEKTGQTVEEVVNVLNKKSGMLGLTGYSSDLRDIIAKEEEGDHRAKVALDVFVSRIHKYIGSYTARMKGVDAIIFTAGVGENSAIIRERVLEGLEYMGVYFDAKRNNVFGEEAFINFPHSPVKIIVIPTDEEVMIARDVLRLGNIG</sequence>
<proteinExistence type="inferred from homology"/>